<evidence type="ECO:0000255" key="1">
    <source>
        <dbReference type="HAMAP-Rule" id="MF_00658"/>
    </source>
</evidence>
<name>RLMH_NATTJ</name>
<sequence>MKFRVVAVGKIKEKYLIRGIEEYQKRLRPYTGLEITEVKDSVLPNKLYQAEIEKVLIEEENRIKSKLSSRDYIIALDSEGSQFTSENFAQQIENLTLEGINQFTFIIGGTLGLSNSLKKEANMLLSFSKFTFPHQLMRLILTEQLYRAIKIIHNEPYHY</sequence>
<organism>
    <name type="scientific">Natranaerobius thermophilus (strain ATCC BAA-1301 / DSM 18059 / JW/NM-WN-LF)</name>
    <dbReference type="NCBI Taxonomy" id="457570"/>
    <lineage>
        <taxon>Bacteria</taxon>
        <taxon>Bacillati</taxon>
        <taxon>Bacillota</taxon>
        <taxon>Clostridia</taxon>
        <taxon>Natranaerobiales</taxon>
        <taxon>Natranaerobiaceae</taxon>
        <taxon>Natranaerobius</taxon>
    </lineage>
</organism>
<accession>B2A3L2</accession>
<feature type="chain" id="PRO_0000366626" description="Ribosomal RNA large subunit methyltransferase H">
    <location>
        <begin position="1"/>
        <end position="159"/>
    </location>
</feature>
<feature type="binding site" evidence="1">
    <location>
        <position position="76"/>
    </location>
    <ligand>
        <name>S-adenosyl-L-methionine</name>
        <dbReference type="ChEBI" id="CHEBI:59789"/>
    </ligand>
</feature>
<feature type="binding site" evidence="1">
    <location>
        <position position="108"/>
    </location>
    <ligand>
        <name>S-adenosyl-L-methionine</name>
        <dbReference type="ChEBI" id="CHEBI:59789"/>
    </ligand>
</feature>
<protein>
    <recommendedName>
        <fullName evidence="1">Ribosomal RNA large subunit methyltransferase H</fullName>
        <ecNumber evidence="1">2.1.1.177</ecNumber>
    </recommendedName>
    <alternativeName>
        <fullName evidence="1">23S rRNA (pseudouridine1915-N3)-methyltransferase</fullName>
    </alternativeName>
    <alternativeName>
        <fullName evidence="1">23S rRNA m3Psi1915 methyltransferase</fullName>
    </alternativeName>
    <alternativeName>
        <fullName evidence="1">rRNA (pseudouridine-N3-)-methyltransferase RlmH</fullName>
    </alternativeName>
</protein>
<proteinExistence type="inferred from homology"/>
<comment type="function">
    <text evidence="1">Specifically methylates the pseudouridine at position 1915 (m3Psi1915) in 23S rRNA.</text>
</comment>
<comment type="catalytic activity">
    <reaction evidence="1">
        <text>pseudouridine(1915) in 23S rRNA + S-adenosyl-L-methionine = N(3)-methylpseudouridine(1915) in 23S rRNA + S-adenosyl-L-homocysteine + H(+)</text>
        <dbReference type="Rhea" id="RHEA:42752"/>
        <dbReference type="Rhea" id="RHEA-COMP:10221"/>
        <dbReference type="Rhea" id="RHEA-COMP:10222"/>
        <dbReference type="ChEBI" id="CHEBI:15378"/>
        <dbReference type="ChEBI" id="CHEBI:57856"/>
        <dbReference type="ChEBI" id="CHEBI:59789"/>
        <dbReference type="ChEBI" id="CHEBI:65314"/>
        <dbReference type="ChEBI" id="CHEBI:74486"/>
        <dbReference type="EC" id="2.1.1.177"/>
    </reaction>
</comment>
<comment type="subunit">
    <text evidence="1">Homodimer.</text>
</comment>
<comment type="subcellular location">
    <subcellularLocation>
        <location evidence="1">Cytoplasm</location>
    </subcellularLocation>
</comment>
<comment type="similarity">
    <text evidence="1">Belongs to the RNA methyltransferase RlmH family.</text>
</comment>
<keyword id="KW-0963">Cytoplasm</keyword>
<keyword id="KW-0489">Methyltransferase</keyword>
<keyword id="KW-1185">Reference proteome</keyword>
<keyword id="KW-0698">rRNA processing</keyword>
<keyword id="KW-0949">S-adenosyl-L-methionine</keyword>
<keyword id="KW-0808">Transferase</keyword>
<gene>
    <name evidence="1" type="primary">rlmH</name>
    <name type="ordered locus">Nther_2894</name>
</gene>
<reference key="1">
    <citation type="submission" date="2008-04" db="EMBL/GenBank/DDBJ databases">
        <title>Complete sequence of chromosome of Natranaerobius thermophilus JW/NM-WN-LF.</title>
        <authorList>
            <consortium name="US DOE Joint Genome Institute"/>
            <person name="Copeland A."/>
            <person name="Lucas S."/>
            <person name="Lapidus A."/>
            <person name="Glavina del Rio T."/>
            <person name="Dalin E."/>
            <person name="Tice H."/>
            <person name="Bruce D."/>
            <person name="Goodwin L."/>
            <person name="Pitluck S."/>
            <person name="Chertkov O."/>
            <person name="Brettin T."/>
            <person name="Detter J.C."/>
            <person name="Han C."/>
            <person name="Kuske C.R."/>
            <person name="Schmutz J."/>
            <person name="Larimer F."/>
            <person name="Land M."/>
            <person name="Hauser L."/>
            <person name="Kyrpides N."/>
            <person name="Lykidis A."/>
            <person name="Mesbah N.M."/>
            <person name="Wiegel J."/>
        </authorList>
    </citation>
    <scope>NUCLEOTIDE SEQUENCE [LARGE SCALE GENOMIC DNA]</scope>
    <source>
        <strain>ATCC BAA-1301 / DSM 18059 / JW/NM-WN-LF</strain>
    </source>
</reference>
<dbReference type="EC" id="2.1.1.177" evidence="1"/>
<dbReference type="EMBL" id="CP001034">
    <property type="protein sequence ID" value="ACB86441.1"/>
    <property type="molecule type" value="Genomic_DNA"/>
</dbReference>
<dbReference type="RefSeq" id="WP_012449273.1">
    <property type="nucleotide sequence ID" value="NC_010718.1"/>
</dbReference>
<dbReference type="SMR" id="B2A3L2"/>
<dbReference type="FunCoup" id="B2A3L2">
    <property type="interactions" value="174"/>
</dbReference>
<dbReference type="STRING" id="457570.Nther_2894"/>
<dbReference type="KEGG" id="nth:Nther_2894"/>
<dbReference type="eggNOG" id="COG1576">
    <property type="taxonomic scope" value="Bacteria"/>
</dbReference>
<dbReference type="HOGENOM" id="CLU_100552_0_0_9"/>
<dbReference type="InParanoid" id="B2A3L2"/>
<dbReference type="OrthoDB" id="9806643at2"/>
<dbReference type="Proteomes" id="UP000001683">
    <property type="component" value="Chromosome"/>
</dbReference>
<dbReference type="GO" id="GO:0005737">
    <property type="term" value="C:cytoplasm"/>
    <property type="evidence" value="ECO:0007669"/>
    <property type="project" value="UniProtKB-SubCell"/>
</dbReference>
<dbReference type="GO" id="GO:0070038">
    <property type="term" value="F:rRNA (pseudouridine-N3-)-methyltransferase activity"/>
    <property type="evidence" value="ECO:0007669"/>
    <property type="project" value="UniProtKB-UniRule"/>
</dbReference>
<dbReference type="CDD" id="cd18081">
    <property type="entry name" value="RlmH-like"/>
    <property type="match status" value="1"/>
</dbReference>
<dbReference type="Gene3D" id="3.40.1280.10">
    <property type="match status" value="1"/>
</dbReference>
<dbReference type="HAMAP" id="MF_00658">
    <property type="entry name" value="23SrRNA_methyltr_H"/>
    <property type="match status" value="1"/>
</dbReference>
<dbReference type="InterPro" id="IPR029028">
    <property type="entry name" value="Alpha/beta_knot_MTases"/>
</dbReference>
<dbReference type="InterPro" id="IPR003742">
    <property type="entry name" value="RlmH-like"/>
</dbReference>
<dbReference type="InterPro" id="IPR029026">
    <property type="entry name" value="tRNA_m1G_MTases_N"/>
</dbReference>
<dbReference type="NCBIfam" id="NF000985">
    <property type="entry name" value="PRK00103.1-3"/>
    <property type="match status" value="1"/>
</dbReference>
<dbReference type="PANTHER" id="PTHR33603">
    <property type="entry name" value="METHYLTRANSFERASE"/>
    <property type="match status" value="1"/>
</dbReference>
<dbReference type="PANTHER" id="PTHR33603:SF1">
    <property type="entry name" value="RIBOSOMAL RNA LARGE SUBUNIT METHYLTRANSFERASE H"/>
    <property type="match status" value="1"/>
</dbReference>
<dbReference type="Pfam" id="PF02590">
    <property type="entry name" value="SPOUT_MTase"/>
    <property type="match status" value="1"/>
</dbReference>
<dbReference type="PIRSF" id="PIRSF004505">
    <property type="entry name" value="MT_bac"/>
    <property type="match status" value="1"/>
</dbReference>
<dbReference type="SUPFAM" id="SSF75217">
    <property type="entry name" value="alpha/beta knot"/>
    <property type="match status" value="1"/>
</dbReference>